<reference key="1">
    <citation type="journal article" date="2007" name="Proc. Natl. Acad. Sci. U.S.A.">
        <title>Genome plasticity of BCG and impact on vaccine efficacy.</title>
        <authorList>
            <person name="Brosch R."/>
            <person name="Gordon S.V."/>
            <person name="Garnier T."/>
            <person name="Eiglmeier K."/>
            <person name="Frigui W."/>
            <person name="Valenti P."/>
            <person name="Dos Santos S."/>
            <person name="Duthoy S."/>
            <person name="Lacroix C."/>
            <person name="Garcia-Pelayo C."/>
            <person name="Inwald J.K."/>
            <person name="Golby P."/>
            <person name="Garcia J.N."/>
            <person name="Hewinson R.G."/>
            <person name="Behr M.A."/>
            <person name="Quail M.A."/>
            <person name="Churcher C."/>
            <person name="Barrell B.G."/>
            <person name="Parkhill J."/>
            <person name="Cole S.T."/>
        </authorList>
    </citation>
    <scope>NUCLEOTIDE SEQUENCE [LARGE SCALE GENOMIC DNA]</scope>
    <source>
        <strain>BCG / Pasteur 1173P2</strain>
    </source>
</reference>
<reference key="2">
    <citation type="journal article" date="2001" name="J. Immunol.">
        <title>Lipoprotein access to MHC class I presentation during infection of murine macrophages with live mycobacteria.</title>
        <authorList>
            <person name="Neyrolles O."/>
            <person name="Gould K."/>
            <person name="Gares M.P."/>
            <person name="Brett S."/>
            <person name="Janssen R."/>
            <person name="O'Gaora P."/>
            <person name="Herrmann J.L."/>
            <person name="Prevost M.C."/>
            <person name="Perret E."/>
            <person name="Thole J.E."/>
            <person name="Young D."/>
        </authorList>
    </citation>
    <scope>SUBCELLULAR LOCATION DURING INFECTION</scope>
    <source>
        <strain>BCG / Montreal</strain>
    </source>
</reference>
<reference key="3">
    <citation type="journal article" date="2011" name="J. Clin. Invest.">
        <title>Mycobacteria release active membrane vesicles that modulate immune responses in a TLR2-dependent manner in mice.</title>
        <authorList>
            <person name="Prados-Rosales R."/>
            <person name="Baena A."/>
            <person name="Martinez L.R."/>
            <person name="Luque-Garcia J."/>
            <person name="Kalscheuer R."/>
            <person name="Veeraraghavan U."/>
            <person name="Camara C."/>
            <person name="Nosanchuk J.D."/>
            <person name="Besra G.S."/>
            <person name="Chen B."/>
            <person name="Jimenez J."/>
            <person name="Glatman-Freedman A."/>
            <person name="Jacobs W.R. Jr."/>
            <person name="Porcelli S.A."/>
            <person name="Casadevall A."/>
        </authorList>
    </citation>
    <scope>SUBCELLULAR LOCATION</scope>
    <source>
        <strain>BCG / Pasteur 1173P2</strain>
    </source>
</reference>
<dbReference type="EMBL" id="AM408590">
    <property type="protein sequence ID" value="CAL73812.1"/>
    <property type="molecule type" value="Genomic_DNA"/>
</dbReference>
<dbReference type="RefSeq" id="WP_003420544.1">
    <property type="nucleotide sequence ID" value="NC_008769.1"/>
</dbReference>
<dbReference type="SMR" id="A0A0H3M9Z0"/>
<dbReference type="GeneID" id="45427763"/>
<dbReference type="KEGG" id="mbb:BCG_3822"/>
<dbReference type="HOGENOM" id="CLU_117599_0_0_11"/>
<dbReference type="Proteomes" id="UP000001472">
    <property type="component" value="Chromosome"/>
</dbReference>
<dbReference type="GO" id="GO:0097691">
    <property type="term" value="C:bacterial extracellular vesicle"/>
    <property type="evidence" value="ECO:0000314"/>
    <property type="project" value="UniProtKB"/>
</dbReference>
<dbReference type="GO" id="GO:0030430">
    <property type="term" value="C:host cell cytoplasm"/>
    <property type="evidence" value="ECO:0007669"/>
    <property type="project" value="UniProtKB-SubCell"/>
</dbReference>
<dbReference type="GO" id="GO:0005886">
    <property type="term" value="C:plasma membrane"/>
    <property type="evidence" value="ECO:0007669"/>
    <property type="project" value="UniProtKB-SubCell"/>
</dbReference>
<dbReference type="InterPro" id="IPR008691">
    <property type="entry name" value="LpqH"/>
</dbReference>
<dbReference type="Pfam" id="PF05481">
    <property type="entry name" value="Myco_19_kDa"/>
    <property type="match status" value="1"/>
</dbReference>
<dbReference type="PROSITE" id="PS51257">
    <property type="entry name" value="PROKAR_LIPOPROTEIN"/>
    <property type="match status" value="1"/>
</dbReference>
<organism>
    <name type="scientific">Mycobacterium bovis (strain BCG / Pasteur 1173P2)</name>
    <dbReference type="NCBI Taxonomy" id="410289"/>
    <lineage>
        <taxon>Bacteria</taxon>
        <taxon>Bacillati</taxon>
        <taxon>Actinomycetota</taxon>
        <taxon>Actinomycetes</taxon>
        <taxon>Mycobacteriales</taxon>
        <taxon>Mycobacteriaceae</taxon>
        <taxon>Mycobacterium</taxon>
        <taxon>Mycobacterium tuberculosis complex</taxon>
    </lineage>
</organism>
<feature type="signal peptide" evidence="2">
    <location>
        <begin position="1"/>
        <end position="21"/>
    </location>
</feature>
<feature type="chain" id="PRO_0000434896" description="Lipoprotein LpqH" evidence="2">
    <location>
        <begin position="22"/>
        <end position="159"/>
    </location>
</feature>
<feature type="region of interest" description="Disordered" evidence="3">
    <location>
        <begin position="24"/>
        <end position="51"/>
    </location>
</feature>
<feature type="compositionally biased region" description="Low complexity" evidence="3">
    <location>
        <begin position="27"/>
        <end position="49"/>
    </location>
</feature>
<feature type="lipid moiety-binding region" description="N-palmitoyl cysteine" evidence="2">
    <location>
        <position position="22"/>
    </location>
</feature>
<feature type="lipid moiety-binding region" description="S-diacylglycerol cysteine" evidence="2">
    <location>
        <position position="22"/>
    </location>
</feature>
<proteinExistence type="inferred from homology"/>
<protein>
    <recommendedName>
        <fullName>Lipoprotein LpqH</fullName>
    </recommendedName>
    <alternativeName>
        <fullName>19 kDa lipoprotein antigen</fullName>
    </alternativeName>
    <alternativeName>
        <fullName>Putative transporter LpqH</fullName>
    </alternativeName>
</protein>
<comment type="function">
    <text evidence="1">Might be involved in ligand transport. A host TLR2 agonist, modifies host gene expression in response to pathogen.</text>
</comment>
<comment type="subcellular location">
    <subcellularLocation>
        <location evidence="2">Cell membrane</location>
        <topology evidence="2">Lipid-anchor</topology>
    </subcellularLocation>
    <subcellularLocation>
        <location evidence="4">Host cytoplasm</location>
    </subcellularLocation>
    <subcellularLocation>
        <location evidence="5">Extracellular vesicle</location>
        <location evidence="5">Bacterial extracellular vesicle</location>
    </subcellularLocation>
    <text evidence="4 5">Following infection of mouse macrophage cell line J774A.1 by live (not heat-killed) bacteria the protein is detected in host cytoplasm at 1 hr but has decreased dramatically by 3 hrs (PubMed:11123323). Also present in bacterial extracytoplasmic vesicles, both in mouse macrophages and in culture media (PubMed:21364279).</text>
</comment>
<comment type="domain">
    <text evidence="1">Forms a U-shaped beta-half-barrel with a large hydrophobic cavity.</text>
</comment>
<comment type="PTM">
    <text evidence="1">Modified by Lgt on Cys-22 with an S-linked diacylglycerol with a mixture of C16, C18 and C19 fatty acids, signal peptide is removed by LspA, modifed by Lnt with an amide-linked mixture of C16 and C19 fatty acids.</text>
</comment>
<comment type="similarity">
    <text evidence="6">Belongs to the mycobacterial 19 kDa antigen family.</text>
</comment>
<name>LPQH_MYCBP</name>
<evidence type="ECO:0000250" key="1">
    <source>
        <dbReference type="UniProtKB" id="P9WK61"/>
    </source>
</evidence>
<evidence type="ECO:0000255" key="2">
    <source>
        <dbReference type="PROSITE-ProRule" id="PRU00303"/>
    </source>
</evidence>
<evidence type="ECO:0000256" key="3">
    <source>
        <dbReference type="SAM" id="MobiDB-lite"/>
    </source>
</evidence>
<evidence type="ECO:0000269" key="4">
    <source>
    </source>
</evidence>
<evidence type="ECO:0000269" key="5">
    <source>
    </source>
</evidence>
<evidence type="ECO:0000305" key="6"/>
<keyword id="KW-1003">Cell membrane</keyword>
<keyword id="KW-1035">Host cytoplasm</keyword>
<keyword id="KW-0449">Lipoprotein</keyword>
<keyword id="KW-0472">Membrane</keyword>
<keyword id="KW-0564">Palmitate</keyword>
<keyword id="KW-0732">Signal</keyword>
<keyword id="KW-0813">Transport</keyword>
<keyword id="KW-0843">Virulence</keyword>
<sequence length="159" mass="15147">MKRGLTVAVAGAAILVAGLSGCSSNKSTTGSGETTTAAGTTASPGAASGPKVVIDGKDQNVTGSVVCTTAAGNVNIAIGGAATGIAAVLTDGNPPEVKSVGLGNVNGVTLGYTSGTGQGNASATKDGSHYKITGTATGVDMANPMSPVNKSFEIEVTCS</sequence>
<gene>
    <name type="primary">lpqH</name>
    <name type="ordered locus">BCG_3822</name>
</gene>
<accession>A0A0H3M9Z0</accession>